<sequence>MRPAAPGTTPNGASSDIRHQRGVAPIPFGSTNSAIDAHHNSEIRVGRHRAKLDEIRESLKAYEHEAGLLSSHVALGSLATPSSSSVSHSDITNDNAEVMNFSSSSSNAAATTTTVSSAAVSNSNSFRTEGGGHKMRITPMPQRHLMMDTGANETVFRSGKEMIRNGNPSTTISSTPSTTTEESIRIHPAGYRYDMPTPAYHMNNNAPQYSPGYSRPPPPAYDSSPVNTRMTPVATDNYRTHLHMKVHPVVKAPPPNPTMLNHNKNMAPPPPPPAKSTISIETMSEERKADNIQRLYHTSMDKKTASSVVSINVASPHTTKVNVGDSPLPSKSFIIGPRYTADVDRKNFVNYKDELRPDPRLIPSTSDANHEDFRPILFKPRNLEITMKSRAQPPPPQYNQPSEPPPKRVSSPIDRTLLEPYIKNTRRVQPCKPNMLRFYMEQHVERLLQQYKEREKRMKQLEKEMVSAQLPDIMRNKMLGLLQQKESKYTRLRRQKMSKSHFTVISHIGVGAFGKVSLVRKNDTRKVYAMKSLEKADVIMKQQAAHVKAERDILAEADSPWIVRLFFSFQDDACLYFIMEYVPGGDMMTLLIQKGIFEEDLARFYIAELACAIEYVHNVGFIHRDLKPDNILIDQHGHIKLTDFGLCTGLRWTHDRRYYGPENDHHRVDSFSLPPEVAAIDKSVKVLNVRQQTRRITAHSLVGTGNYMAPEVIAKTGHNQSCDWWSTGVILYEMVFGRVPFHDDTPGGTQHRIKNWRNFLDFTYCGNLSKECLMMIQQLICDASSRLGSHGKDVAERTAQVKNHPWFRGIDWVNLRKLRADYIYIPRVTHDEDTSNFETFQDNDRADKPNVRGLHNPAFYEFTYRHFFDTDSVGCPSLRPSRRRSLRPLLENGTFNESVSEEDSSSHI</sequence>
<dbReference type="EC" id="2.7.11.1" evidence="1"/>
<dbReference type="EMBL" id="Z81594">
    <property type="protein sequence ID" value="CAB04745.1"/>
    <property type="molecule type" value="Genomic_DNA"/>
</dbReference>
<dbReference type="PIR" id="T25035">
    <property type="entry name" value="T25035"/>
</dbReference>
<dbReference type="RefSeq" id="NP_492699.1">
    <property type="nucleotide sequence ID" value="NM_060298.5"/>
</dbReference>
<dbReference type="SMR" id="O45797"/>
<dbReference type="DIP" id="DIP-26953N"/>
<dbReference type="FunCoup" id="O45797">
    <property type="interactions" value="57"/>
</dbReference>
<dbReference type="IntAct" id="O45797">
    <property type="interactions" value="2"/>
</dbReference>
<dbReference type="STRING" id="6239.T20F10.1.1"/>
<dbReference type="PaxDb" id="6239-T20F10.1"/>
<dbReference type="PeptideAtlas" id="O45797"/>
<dbReference type="EnsemblMetazoa" id="T20F10.1.1">
    <property type="protein sequence ID" value="T20F10.1.1"/>
    <property type="gene ID" value="WBGene00007047"/>
</dbReference>
<dbReference type="GeneID" id="172896"/>
<dbReference type="KEGG" id="cel:CELE_T20F10.1"/>
<dbReference type="UCSC" id="T20F10.1">
    <property type="organism name" value="c. elegans"/>
</dbReference>
<dbReference type="AGR" id="WB:WBGene00007047"/>
<dbReference type="CTD" id="172896"/>
<dbReference type="WormBase" id="T20F10.1">
    <property type="protein sequence ID" value="CE13844"/>
    <property type="gene ID" value="WBGene00007047"/>
    <property type="gene designation" value="wts-1"/>
</dbReference>
<dbReference type="eggNOG" id="KOG0608">
    <property type="taxonomic scope" value="Eukaryota"/>
</dbReference>
<dbReference type="GeneTree" id="ENSGT00940000170511"/>
<dbReference type="HOGENOM" id="CLU_014539_0_0_1"/>
<dbReference type="InParanoid" id="O45797"/>
<dbReference type="OMA" id="YHTSMDK"/>
<dbReference type="OrthoDB" id="2156623at2759"/>
<dbReference type="PhylomeDB" id="O45797"/>
<dbReference type="Reactome" id="R-CEL-2028269">
    <property type="pathway name" value="Signaling by Hippo"/>
</dbReference>
<dbReference type="PRO" id="PR:O45797"/>
<dbReference type="Proteomes" id="UP000001940">
    <property type="component" value="Chromosome I"/>
</dbReference>
<dbReference type="Bgee" id="WBGene00007047">
    <property type="expression patterns" value="Expressed in pharyngeal muscle cell (C elegans) and 4 other cell types or tissues"/>
</dbReference>
<dbReference type="GO" id="GO:0016324">
    <property type="term" value="C:apical plasma membrane"/>
    <property type="evidence" value="ECO:0000314"/>
    <property type="project" value="UniProtKB"/>
</dbReference>
<dbReference type="GO" id="GO:0005737">
    <property type="term" value="C:cytoplasm"/>
    <property type="evidence" value="ECO:0000314"/>
    <property type="project" value="WormBase"/>
</dbReference>
<dbReference type="GO" id="GO:0016020">
    <property type="term" value="C:membrane"/>
    <property type="evidence" value="ECO:0000314"/>
    <property type="project" value="UniProtKB"/>
</dbReference>
<dbReference type="GO" id="GO:0005886">
    <property type="term" value="C:plasma membrane"/>
    <property type="evidence" value="ECO:0000314"/>
    <property type="project" value="WormBase"/>
</dbReference>
<dbReference type="GO" id="GO:0005524">
    <property type="term" value="F:ATP binding"/>
    <property type="evidence" value="ECO:0007669"/>
    <property type="project" value="UniProtKB-KW"/>
</dbReference>
<dbReference type="GO" id="GO:0046872">
    <property type="term" value="F:metal ion binding"/>
    <property type="evidence" value="ECO:0007669"/>
    <property type="project" value="UniProtKB-KW"/>
</dbReference>
<dbReference type="GO" id="GO:0106310">
    <property type="term" value="F:protein serine kinase activity"/>
    <property type="evidence" value="ECO:0007669"/>
    <property type="project" value="RHEA"/>
</dbReference>
<dbReference type="GO" id="GO:0004674">
    <property type="term" value="F:protein serine/threonine kinase activity"/>
    <property type="evidence" value="ECO:0000315"/>
    <property type="project" value="WormBase"/>
</dbReference>
<dbReference type="GO" id="GO:0001223">
    <property type="term" value="F:transcription coactivator binding"/>
    <property type="evidence" value="ECO:0000353"/>
    <property type="project" value="WormBase"/>
</dbReference>
<dbReference type="GO" id="GO:0045176">
    <property type="term" value="P:apical protein localization"/>
    <property type="evidence" value="ECO:0000315"/>
    <property type="project" value="WormBase"/>
</dbReference>
<dbReference type="GO" id="GO:0030421">
    <property type="term" value="P:defecation"/>
    <property type="evidence" value="ECO:0000315"/>
    <property type="project" value="WormBase"/>
</dbReference>
<dbReference type="GO" id="GO:0000082">
    <property type="term" value="P:G1/S transition of mitotic cell cycle"/>
    <property type="evidence" value="ECO:0000318"/>
    <property type="project" value="GO_Central"/>
</dbReference>
<dbReference type="GO" id="GO:0035329">
    <property type="term" value="P:hippo signaling"/>
    <property type="evidence" value="ECO:0000318"/>
    <property type="project" value="GO_Central"/>
</dbReference>
<dbReference type="GO" id="GO:0042308">
    <property type="term" value="P:negative regulation of protein import into nucleus"/>
    <property type="evidence" value="ECO:0000315"/>
    <property type="project" value="WormBase"/>
</dbReference>
<dbReference type="GO" id="GO:0002119">
    <property type="term" value="P:nematode larval development"/>
    <property type="evidence" value="ECO:0000315"/>
    <property type="project" value="UniProtKB"/>
</dbReference>
<dbReference type="GO" id="GO:0043065">
    <property type="term" value="P:positive regulation of apoptotic process"/>
    <property type="evidence" value="ECO:0000318"/>
    <property type="project" value="GO_Central"/>
</dbReference>
<dbReference type="GO" id="GO:0048621">
    <property type="term" value="P:post-embryonic digestive tract morphogenesis"/>
    <property type="evidence" value="ECO:0000315"/>
    <property type="project" value="WormBase"/>
</dbReference>
<dbReference type="GO" id="GO:0046620">
    <property type="term" value="P:regulation of organ growth"/>
    <property type="evidence" value="ECO:0000318"/>
    <property type="project" value="GO_Central"/>
</dbReference>
<dbReference type="CDD" id="cd21774">
    <property type="entry name" value="MobB_LATS"/>
    <property type="match status" value="1"/>
</dbReference>
<dbReference type="CDD" id="cd05598">
    <property type="entry name" value="STKc_LATS"/>
    <property type="match status" value="1"/>
</dbReference>
<dbReference type="FunFam" id="3.30.200.20:FF:000391">
    <property type="entry name" value="Large tumor suppressor kinase 1"/>
    <property type="match status" value="1"/>
</dbReference>
<dbReference type="FunFam" id="1.10.510.10:FF:000086">
    <property type="entry name" value="Non-specific serine/threonine protein kinase"/>
    <property type="match status" value="1"/>
</dbReference>
<dbReference type="FunFam" id="1.10.510.10:FF:001404">
    <property type="entry name" value="Serine/threonine-protein kinase WARTS homolog"/>
    <property type="match status" value="1"/>
</dbReference>
<dbReference type="Gene3D" id="3.30.200.20">
    <property type="entry name" value="Phosphorylase Kinase, domain 1"/>
    <property type="match status" value="2"/>
</dbReference>
<dbReference type="Gene3D" id="1.10.510.10">
    <property type="entry name" value="Transferase(Phosphotransferase) domain 1"/>
    <property type="match status" value="2"/>
</dbReference>
<dbReference type="InterPro" id="IPR000961">
    <property type="entry name" value="AGC-kinase_C"/>
</dbReference>
<dbReference type="InterPro" id="IPR011009">
    <property type="entry name" value="Kinase-like_dom_sf"/>
</dbReference>
<dbReference type="InterPro" id="IPR000719">
    <property type="entry name" value="Prot_kinase_dom"/>
</dbReference>
<dbReference type="InterPro" id="IPR017441">
    <property type="entry name" value="Protein_kinase_ATP_BS"/>
</dbReference>
<dbReference type="InterPro" id="IPR008271">
    <property type="entry name" value="Ser/Thr_kinase_AS"/>
</dbReference>
<dbReference type="InterPro" id="IPR050236">
    <property type="entry name" value="Ser_Thr_kinase_AGC"/>
</dbReference>
<dbReference type="PANTHER" id="PTHR24356">
    <property type="entry name" value="SERINE/THREONINE-PROTEIN KINASE"/>
    <property type="match status" value="1"/>
</dbReference>
<dbReference type="PANTHER" id="PTHR24356:SF418">
    <property type="entry name" value="SERINE_THREONINE-PROTEIN KINASE WARTS"/>
    <property type="match status" value="1"/>
</dbReference>
<dbReference type="Pfam" id="PF00069">
    <property type="entry name" value="Pkinase"/>
    <property type="match status" value="1"/>
</dbReference>
<dbReference type="SMART" id="SM00133">
    <property type="entry name" value="S_TK_X"/>
    <property type="match status" value="1"/>
</dbReference>
<dbReference type="SMART" id="SM00220">
    <property type="entry name" value="S_TKc"/>
    <property type="match status" value="1"/>
</dbReference>
<dbReference type="SUPFAM" id="SSF56112">
    <property type="entry name" value="Protein kinase-like (PK-like)"/>
    <property type="match status" value="1"/>
</dbReference>
<dbReference type="PROSITE" id="PS51285">
    <property type="entry name" value="AGC_KINASE_CTER"/>
    <property type="match status" value="1"/>
</dbReference>
<dbReference type="PROSITE" id="PS00107">
    <property type="entry name" value="PROTEIN_KINASE_ATP"/>
    <property type="match status" value="1"/>
</dbReference>
<dbReference type="PROSITE" id="PS50011">
    <property type="entry name" value="PROTEIN_KINASE_DOM"/>
    <property type="match status" value="1"/>
</dbReference>
<dbReference type="PROSITE" id="PS00108">
    <property type="entry name" value="PROTEIN_KINASE_ST"/>
    <property type="match status" value="1"/>
</dbReference>
<keyword id="KW-0067">ATP-binding</keyword>
<keyword id="KW-1003">Cell membrane</keyword>
<keyword id="KW-0175">Coiled coil</keyword>
<keyword id="KW-0963">Cytoplasm</keyword>
<keyword id="KW-0217">Developmental protein</keyword>
<keyword id="KW-0418">Kinase</keyword>
<keyword id="KW-0460">Magnesium</keyword>
<keyword id="KW-0472">Membrane</keyword>
<keyword id="KW-0479">Metal-binding</keyword>
<keyword id="KW-0547">Nucleotide-binding</keyword>
<keyword id="KW-0597">Phosphoprotein</keyword>
<keyword id="KW-1185">Reference proteome</keyword>
<keyword id="KW-0723">Serine/threonine-protein kinase</keyword>
<keyword id="KW-0808">Transferase</keyword>
<protein>
    <recommendedName>
        <fullName evidence="9">Serine/threonine-protein kinase WARTS homolog</fullName>
        <ecNumber evidence="1">2.7.11.1</ecNumber>
    </recommendedName>
    <alternativeName>
        <fullName evidence="10">LATS kinase homolog</fullName>
    </alternativeName>
</protein>
<organism evidence="11">
    <name type="scientific">Caenorhabditis elegans</name>
    <dbReference type="NCBI Taxonomy" id="6239"/>
    <lineage>
        <taxon>Eukaryota</taxon>
        <taxon>Metazoa</taxon>
        <taxon>Ecdysozoa</taxon>
        <taxon>Nematoda</taxon>
        <taxon>Chromadorea</taxon>
        <taxon>Rhabditida</taxon>
        <taxon>Rhabditina</taxon>
        <taxon>Rhabditomorpha</taxon>
        <taxon>Rhabditoidea</taxon>
        <taxon>Rhabditidae</taxon>
        <taxon>Peloderinae</taxon>
        <taxon>Caenorhabditis</taxon>
    </lineage>
</organism>
<gene>
    <name evidence="12" type="primary">wts-1</name>
    <name evidence="12" type="ORF">T20F10.1</name>
</gene>
<comment type="function">
    <text evidence="6 7 8">Phosphorylates yap-1 which may negatively regulate yap-1 nuclear localization (PubMed:23396260). Plays an essential role in larval development (PubMed:19605499, PubMed:19737560). Regulates growth, the formation of gut granules, lifespan and cell and body sizes probably in synergy with the TGF-beta sma/mab pathway (PubMed:19737560). Does not appear to regulate apoptosis and proliferation (PubMed:19605499). In addition, may synergize with the TGF-beta daf-7 dauer pathway to regulate entry into the dauer stage (PubMed:19737560). Maintains the cellular integrity of intestinal cells by regulating the localization of apical actin and junctional proteins (PubMed:19605499).</text>
</comment>
<comment type="catalytic activity">
    <reaction evidence="1">
        <text>L-seryl-[protein] + ATP = O-phospho-L-seryl-[protein] + ADP + H(+)</text>
        <dbReference type="Rhea" id="RHEA:17989"/>
        <dbReference type="Rhea" id="RHEA-COMP:9863"/>
        <dbReference type="Rhea" id="RHEA-COMP:11604"/>
        <dbReference type="ChEBI" id="CHEBI:15378"/>
        <dbReference type="ChEBI" id="CHEBI:29999"/>
        <dbReference type="ChEBI" id="CHEBI:30616"/>
        <dbReference type="ChEBI" id="CHEBI:83421"/>
        <dbReference type="ChEBI" id="CHEBI:456216"/>
        <dbReference type="EC" id="2.7.11.1"/>
    </reaction>
</comment>
<comment type="catalytic activity">
    <reaction evidence="1">
        <text>L-threonyl-[protein] + ATP = O-phospho-L-threonyl-[protein] + ADP + H(+)</text>
        <dbReference type="Rhea" id="RHEA:46608"/>
        <dbReference type="Rhea" id="RHEA-COMP:11060"/>
        <dbReference type="Rhea" id="RHEA-COMP:11605"/>
        <dbReference type="ChEBI" id="CHEBI:15378"/>
        <dbReference type="ChEBI" id="CHEBI:30013"/>
        <dbReference type="ChEBI" id="CHEBI:30616"/>
        <dbReference type="ChEBI" id="CHEBI:61977"/>
        <dbReference type="ChEBI" id="CHEBI:456216"/>
        <dbReference type="EC" id="2.7.11.1"/>
    </reaction>
</comment>
<comment type="cofactor">
    <cofactor evidence="1">
        <name>Mg(2+)</name>
        <dbReference type="ChEBI" id="CHEBI:18420"/>
    </cofactor>
</comment>
<comment type="subunit">
    <text evidence="8">Interacts (via N-terminus) with yap-1 (via WW domain).</text>
</comment>
<comment type="subcellular location">
    <subcellularLocation>
        <location evidence="6 7">Cytoplasm</location>
    </subcellularLocation>
    <subcellularLocation>
        <location evidence="6 7">Apical cell membrane</location>
    </subcellularLocation>
    <text evidence="6 7">In epithelial cells, localized near the plasma membrane. In intestinal cells, localized in the subapical membrane region (PubMed:19605499, PubMed:19737560). Membrane localization starts in the late embryo (PubMed:19605499).</text>
</comment>
<comment type="tissue specificity">
    <text evidence="6 7">Expressed in muscles and epithelial tissues including pharynx, intestine and hypodermis (PubMed:19605499). Expressed in vulval and spermathecal seam cells (PubMed:19737560).</text>
</comment>
<comment type="developmental stage">
    <text evidence="6">Expressed at the embryonic comma stage and during all the larval stages and in adults.</text>
</comment>
<comment type="disruption phenotype">
    <text evidence="6 7">RNAi-mediated knockdown results in larval lethality in 50 percent of the animals (PubMed:19605499, PubMed:19737560). Surviving knockdown animals have several defects including a slower growth and a partial distortion of the pharynx. In surviving L3 animals seam cells are 30 percent smaller (PubMed:19737560).</text>
</comment>
<comment type="similarity">
    <text evidence="9">Belongs to the protein kinase superfamily. AGC Ser/Thr protein kinase family.</text>
</comment>
<accession>O45797</accession>
<feature type="chain" id="PRO_0000432473" description="Serine/threonine-protein kinase WARTS homolog" evidence="9">
    <location>
        <begin position="1"/>
        <end position="908"/>
    </location>
</feature>
<feature type="domain" description="Protein kinase" evidence="3">
    <location>
        <begin position="502"/>
        <end position="807"/>
    </location>
</feature>
<feature type="domain" description="AGC-kinase C-terminal" evidence="4">
    <location>
        <begin position="808"/>
        <end position="874"/>
    </location>
</feature>
<feature type="region of interest" description="Disordered" evidence="5">
    <location>
        <begin position="115"/>
        <end position="134"/>
    </location>
</feature>
<feature type="region of interest" description="Disordered" evidence="5">
    <location>
        <begin position="162"/>
        <end position="183"/>
    </location>
</feature>
<feature type="region of interest" description="Disordered" evidence="5">
    <location>
        <begin position="203"/>
        <end position="225"/>
    </location>
</feature>
<feature type="region of interest" description="Disordered" evidence="5">
    <location>
        <begin position="388"/>
        <end position="412"/>
    </location>
</feature>
<feature type="coiled-coil region" evidence="2">
    <location>
        <begin position="42"/>
        <end position="70"/>
    </location>
</feature>
<feature type="coiled-coil region" evidence="2">
    <location>
        <begin position="439"/>
        <end position="470"/>
    </location>
</feature>
<feature type="compositionally biased region" description="Low complexity" evidence="5">
    <location>
        <begin position="115"/>
        <end position="125"/>
    </location>
</feature>
<feature type="compositionally biased region" description="Low complexity" evidence="5">
    <location>
        <begin position="168"/>
        <end position="181"/>
    </location>
</feature>
<feature type="compositionally biased region" description="Pro residues" evidence="5">
    <location>
        <begin position="392"/>
        <end position="404"/>
    </location>
</feature>
<feature type="active site" description="Proton acceptor" evidence="3">
    <location>
        <position position="625"/>
    </location>
</feature>
<feature type="binding site" evidence="3">
    <location>
        <begin position="508"/>
        <end position="516"/>
    </location>
    <ligand>
        <name>ATP</name>
        <dbReference type="ChEBI" id="CHEBI:30616"/>
    </ligand>
</feature>
<feature type="binding site" evidence="3">
    <location>
        <position position="531"/>
    </location>
    <ligand>
        <name>ATP</name>
        <dbReference type="ChEBI" id="CHEBI:30616"/>
    </ligand>
</feature>
<evidence type="ECO:0000250" key="1">
    <source>
        <dbReference type="UniProtKB" id="O95835"/>
    </source>
</evidence>
<evidence type="ECO:0000255" key="2"/>
<evidence type="ECO:0000255" key="3">
    <source>
        <dbReference type="PROSITE-ProRule" id="PRU00159"/>
    </source>
</evidence>
<evidence type="ECO:0000255" key="4">
    <source>
        <dbReference type="PROSITE-ProRule" id="PRU00618"/>
    </source>
</evidence>
<evidence type="ECO:0000256" key="5">
    <source>
        <dbReference type="SAM" id="MobiDB-lite"/>
    </source>
</evidence>
<evidence type="ECO:0000269" key="6">
    <source>
    </source>
</evidence>
<evidence type="ECO:0000269" key="7">
    <source>
    </source>
</evidence>
<evidence type="ECO:0000269" key="8">
    <source>
    </source>
</evidence>
<evidence type="ECO:0000305" key="9"/>
<evidence type="ECO:0000305" key="10">
    <source>
    </source>
</evidence>
<evidence type="ECO:0000312" key="11">
    <source>
        <dbReference type="Proteomes" id="UP000001940"/>
    </source>
</evidence>
<evidence type="ECO:0000312" key="12">
    <source>
        <dbReference type="WormBase" id="T20F10.1"/>
    </source>
</evidence>
<reference evidence="11" key="1">
    <citation type="journal article" date="1998" name="Science">
        <title>Genome sequence of the nematode C. elegans: a platform for investigating biology.</title>
        <authorList>
            <consortium name="The C. elegans sequencing consortium"/>
        </authorList>
    </citation>
    <scope>NUCLEOTIDE SEQUENCE [LARGE SCALE GENOMIC DNA]</scope>
    <source>
        <strain evidence="11">Bristol N2</strain>
    </source>
</reference>
<reference evidence="9" key="2">
    <citation type="journal article" date="2009" name="FEBS Lett.">
        <title>Ce-wts-1 plays important roles in Caenorhabditis elegans development.</title>
        <authorList>
            <person name="Cai Q."/>
            <person name="Wang W."/>
            <person name="Gao Y."/>
            <person name="Yang Y."/>
            <person name="Zhu Z."/>
            <person name="Fan Q."/>
        </authorList>
    </citation>
    <scope>FUNCTION</scope>
    <scope>SUBCELLULAR LOCATION</scope>
    <scope>TISSUE SPECIFICITY</scope>
    <scope>DISRUPTION PHENOTYPE</scope>
</reference>
<reference evidence="9" key="3">
    <citation type="journal article" date="2009" name="Development">
        <title>Lats kinase is involved in the intestinal apical membrane integrity in the nematode Caenorhabditis elegans.</title>
        <authorList>
            <person name="Kang J."/>
            <person name="Shin D."/>
            <person name="Yu J.R."/>
            <person name="Lee J."/>
        </authorList>
    </citation>
    <scope>FUNCTION</scope>
    <scope>SUBCELLULAR LOCATION</scope>
    <scope>TISSUE SPECIFICITY</scope>
    <scope>DEVELOPMENTAL STAGE</scope>
    <scope>DISRUPTION PHENOTYPE</scope>
</reference>
<reference evidence="9" key="4">
    <citation type="journal article" date="2013" name="Exp. Cell Res.">
        <title>Yes-associated protein homolog, YAP-1, is involved in the thermotolerance and aging in the nematode Caenorhabditis elegans.</title>
        <authorList>
            <person name="Iwasa H."/>
            <person name="Maimaiti S."/>
            <person name="Kuroyanagi H."/>
            <person name="Kawano S."/>
            <person name="Inami K."/>
            <person name="Timalsina S."/>
            <person name="Ikeda M."/>
            <person name="Nakagawa K."/>
            <person name="Hata Y."/>
        </authorList>
    </citation>
    <scope>FUNCTION</scope>
    <scope>INTERACTION WITH YAP-1</scope>
</reference>
<proteinExistence type="evidence at protein level"/>
<name>WARTS_CAEEL</name>